<organism>
    <name type="scientific">Rattus norvegicus</name>
    <name type="common">Rat</name>
    <dbReference type="NCBI Taxonomy" id="10116"/>
    <lineage>
        <taxon>Eukaryota</taxon>
        <taxon>Metazoa</taxon>
        <taxon>Chordata</taxon>
        <taxon>Craniata</taxon>
        <taxon>Vertebrata</taxon>
        <taxon>Euteleostomi</taxon>
        <taxon>Mammalia</taxon>
        <taxon>Eutheria</taxon>
        <taxon>Euarchontoglires</taxon>
        <taxon>Glires</taxon>
        <taxon>Rodentia</taxon>
        <taxon>Myomorpha</taxon>
        <taxon>Muroidea</taxon>
        <taxon>Muridae</taxon>
        <taxon>Murinae</taxon>
        <taxon>Rattus</taxon>
    </lineage>
</organism>
<feature type="chain" id="PRO_0000085812" description="Cyclin-dependent kinase-like 1">
    <location>
        <begin position="1"/>
        <end position="352"/>
    </location>
</feature>
<feature type="domain" description="Protein kinase" evidence="2">
    <location>
        <begin position="4"/>
        <end position="287"/>
    </location>
</feature>
<feature type="short sequence motif" description="[NKR]KIAxRE">
    <location>
        <begin position="45"/>
        <end position="51"/>
    </location>
</feature>
<feature type="active site" description="Proton acceptor" evidence="2 3">
    <location>
        <position position="126"/>
    </location>
</feature>
<feature type="binding site" evidence="2">
    <location>
        <begin position="10"/>
        <end position="18"/>
    </location>
    <ligand>
        <name>ATP</name>
        <dbReference type="ChEBI" id="CHEBI:30616"/>
    </ligand>
</feature>
<feature type="binding site" evidence="2">
    <location>
        <position position="33"/>
    </location>
    <ligand>
        <name>ATP</name>
        <dbReference type="ChEBI" id="CHEBI:30616"/>
    </ligand>
</feature>
<evidence type="ECO:0000250" key="1"/>
<evidence type="ECO:0000255" key="2">
    <source>
        <dbReference type="PROSITE-ProRule" id="PRU00159"/>
    </source>
</evidence>
<evidence type="ECO:0000255" key="3">
    <source>
        <dbReference type="PROSITE-ProRule" id="PRU10027"/>
    </source>
</evidence>
<evidence type="ECO:0000305" key="4"/>
<evidence type="ECO:0000312" key="5">
    <source>
        <dbReference type="RGD" id="1305080"/>
    </source>
</evidence>
<sequence length="352" mass="40899">MEKYEKIGKIGEGSYGVVFKCRNRDTGQIVAIKRFLETEDDPVIKKIALREIRMLKQLKHPNLVSLLEVFRRKRRLHLVFEYCHHTVLHELDRYQRGVPEPLVKNITWQTLQAVNFCHKHNCIHRDVKPENILITKHSVIKLCDFGFARLLTGPGDYYTDYVATRWYRSPELLVGDTQYGPPVDVWAIGCVFAELLSGVPLWPGKSDVDQLYLIRKTLGDLIPRHQQVFSMNQYFSGVKIPDPEDMETLELKFPNISYSALGFLKGCLHMDPAERLTCEQLLQHPYFDSIRDVGELARPHDKPTRKTLRQSRKHLTGLQHLPQLTSSSVLPALDRKKYHCGTRNFNYHFPNI</sequence>
<accession>Q66HE7</accession>
<proteinExistence type="evidence at transcript level"/>
<gene>
    <name evidence="5" type="primary">Cdkl1</name>
</gene>
<protein>
    <recommendedName>
        <fullName evidence="4">Cyclin-dependent kinase-like 1</fullName>
        <ecNumber>2.7.11.22</ecNumber>
    </recommendedName>
</protein>
<reference key="1">
    <citation type="journal article" date="2004" name="Genome Res.">
        <title>The status, quality, and expansion of the NIH full-length cDNA project: the Mammalian Gene Collection (MGC).</title>
        <authorList>
            <consortium name="The MGC Project Team"/>
        </authorList>
    </citation>
    <scope>NUCLEOTIDE SEQUENCE [LARGE SCALE MRNA]</scope>
    <source>
        <tissue>Kidney</tissue>
    </source>
</reference>
<keyword id="KW-0067">ATP-binding</keyword>
<keyword id="KW-0963">Cytoplasm</keyword>
<keyword id="KW-0418">Kinase</keyword>
<keyword id="KW-0547">Nucleotide-binding</keyword>
<keyword id="KW-0539">Nucleus</keyword>
<keyword id="KW-1185">Reference proteome</keyword>
<keyword id="KW-0723">Serine/threonine-protein kinase</keyword>
<keyword id="KW-0808">Transferase</keyword>
<comment type="catalytic activity">
    <reaction>
        <text>L-seryl-[protein] + ATP = O-phospho-L-seryl-[protein] + ADP + H(+)</text>
        <dbReference type="Rhea" id="RHEA:17989"/>
        <dbReference type="Rhea" id="RHEA-COMP:9863"/>
        <dbReference type="Rhea" id="RHEA-COMP:11604"/>
        <dbReference type="ChEBI" id="CHEBI:15378"/>
        <dbReference type="ChEBI" id="CHEBI:29999"/>
        <dbReference type="ChEBI" id="CHEBI:30616"/>
        <dbReference type="ChEBI" id="CHEBI:83421"/>
        <dbReference type="ChEBI" id="CHEBI:456216"/>
        <dbReference type="EC" id="2.7.11.22"/>
    </reaction>
</comment>
<comment type="catalytic activity">
    <reaction>
        <text>L-threonyl-[protein] + ATP = O-phospho-L-threonyl-[protein] + ADP + H(+)</text>
        <dbReference type="Rhea" id="RHEA:46608"/>
        <dbReference type="Rhea" id="RHEA-COMP:11060"/>
        <dbReference type="Rhea" id="RHEA-COMP:11605"/>
        <dbReference type="ChEBI" id="CHEBI:15378"/>
        <dbReference type="ChEBI" id="CHEBI:30013"/>
        <dbReference type="ChEBI" id="CHEBI:30616"/>
        <dbReference type="ChEBI" id="CHEBI:61977"/>
        <dbReference type="ChEBI" id="CHEBI:456216"/>
        <dbReference type="EC" id="2.7.11.22"/>
    </reaction>
</comment>
<comment type="subcellular location">
    <subcellularLocation>
        <location evidence="1">Cytoplasm</location>
    </subcellularLocation>
    <subcellularLocation>
        <location evidence="1">Nucleus</location>
    </subcellularLocation>
</comment>
<comment type="domain">
    <text>The [NKR]KIAxRE motif seems to be a cyclin-binding region.</text>
</comment>
<comment type="similarity">
    <text evidence="4">Belongs to the protein kinase superfamily. CMGC Ser/Thr protein kinase family. CDC2/CDKX subfamily.</text>
</comment>
<name>CDKL1_RAT</name>
<dbReference type="EC" id="2.7.11.22"/>
<dbReference type="EMBL" id="BC081896">
    <property type="protein sequence ID" value="AAH81896.1"/>
    <property type="molecule type" value="mRNA"/>
</dbReference>
<dbReference type="RefSeq" id="NP_001020292.1">
    <property type="nucleotide sequence ID" value="NM_001025121.1"/>
</dbReference>
<dbReference type="RefSeq" id="XP_006240233.1">
    <property type="nucleotide sequence ID" value="XM_006240171.3"/>
</dbReference>
<dbReference type="RefSeq" id="XP_006240234.1">
    <property type="nucleotide sequence ID" value="XM_006240172.3"/>
</dbReference>
<dbReference type="SMR" id="Q66HE7"/>
<dbReference type="FunCoup" id="Q66HE7">
    <property type="interactions" value="297"/>
</dbReference>
<dbReference type="STRING" id="10116.ENSRNOP00000006374"/>
<dbReference type="PhosphoSitePlus" id="Q66HE7"/>
<dbReference type="PaxDb" id="10116-ENSRNOP00000006374"/>
<dbReference type="GeneID" id="314198"/>
<dbReference type="KEGG" id="rno:314198"/>
<dbReference type="UCSC" id="RGD:1305080">
    <property type="organism name" value="rat"/>
</dbReference>
<dbReference type="AGR" id="RGD:1305080"/>
<dbReference type="CTD" id="8814"/>
<dbReference type="RGD" id="1305080">
    <property type="gene designation" value="Cdkl1"/>
</dbReference>
<dbReference type="VEuPathDB" id="HostDB:ENSRNOG00000038720"/>
<dbReference type="eggNOG" id="KOG0593">
    <property type="taxonomic scope" value="Eukaryota"/>
</dbReference>
<dbReference type="HOGENOM" id="CLU_000288_181_1_1"/>
<dbReference type="InParanoid" id="Q66HE7"/>
<dbReference type="OrthoDB" id="13805at9989"/>
<dbReference type="PhylomeDB" id="Q66HE7"/>
<dbReference type="TreeFam" id="TF101031"/>
<dbReference type="PRO" id="PR:Q66HE7"/>
<dbReference type="Proteomes" id="UP000002494">
    <property type="component" value="Chromosome 6"/>
</dbReference>
<dbReference type="Bgee" id="ENSRNOG00000038720">
    <property type="expression patterns" value="Expressed in adult mammalian kidney and 18 other cell types or tissues"/>
</dbReference>
<dbReference type="GO" id="GO:0035869">
    <property type="term" value="C:ciliary transition zone"/>
    <property type="evidence" value="ECO:0000250"/>
    <property type="project" value="UniProtKB"/>
</dbReference>
<dbReference type="GO" id="GO:0005737">
    <property type="term" value="C:cytoplasm"/>
    <property type="evidence" value="ECO:0007669"/>
    <property type="project" value="UniProtKB-SubCell"/>
</dbReference>
<dbReference type="GO" id="GO:0005654">
    <property type="term" value="C:nucleoplasm"/>
    <property type="evidence" value="ECO:0007669"/>
    <property type="project" value="Ensembl"/>
</dbReference>
<dbReference type="GO" id="GO:0005634">
    <property type="term" value="C:nucleus"/>
    <property type="evidence" value="ECO:0000318"/>
    <property type="project" value="GO_Central"/>
</dbReference>
<dbReference type="GO" id="GO:0005524">
    <property type="term" value="F:ATP binding"/>
    <property type="evidence" value="ECO:0007669"/>
    <property type="project" value="UniProtKB-KW"/>
</dbReference>
<dbReference type="GO" id="GO:0004693">
    <property type="term" value="F:cyclin-dependent protein serine/threonine kinase activity"/>
    <property type="evidence" value="ECO:0007669"/>
    <property type="project" value="UniProtKB-EC"/>
</dbReference>
<dbReference type="GO" id="GO:0106310">
    <property type="term" value="F:protein serine kinase activity"/>
    <property type="evidence" value="ECO:0007669"/>
    <property type="project" value="RHEA"/>
</dbReference>
<dbReference type="GO" id="GO:0004674">
    <property type="term" value="F:protein serine/threonine kinase activity"/>
    <property type="evidence" value="ECO:0000318"/>
    <property type="project" value="GO_Central"/>
</dbReference>
<dbReference type="GO" id="GO:0007507">
    <property type="term" value="P:heart development"/>
    <property type="evidence" value="ECO:0000270"/>
    <property type="project" value="RGD"/>
</dbReference>
<dbReference type="GO" id="GO:1902017">
    <property type="term" value="P:regulation of cilium assembly"/>
    <property type="evidence" value="ECO:0000250"/>
    <property type="project" value="UniProtKB"/>
</dbReference>
<dbReference type="CDD" id="cd07847">
    <property type="entry name" value="STKc_CDKL1_4"/>
    <property type="match status" value="1"/>
</dbReference>
<dbReference type="FunFam" id="1.10.510.10:FF:000191">
    <property type="entry name" value="cyclin-dependent kinase-like 1 isoform X1"/>
    <property type="match status" value="1"/>
</dbReference>
<dbReference type="FunFam" id="3.30.200.20:FF:000049">
    <property type="entry name" value="cyclin-dependent kinase-like 1 isoform X1"/>
    <property type="match status" value="1"/>
</dbReference>
<dbReference type="Gene3D" id="3.30.200.20">
    <property type="entry name" value="Phosphorylase Kinase, domain 1"/>
    <property type="match status" value="1"/>
</dbReference>
<dbReference type="Gene3D" id="1.10.510.10">
    <property type="entry name" value="Transferase(Phosphotransferase) domain 1"/>
    <property type="match status" value="1"/>
</dbReference>
<dbReference type="InterPro" id="IPR050108">
    <property type="entry name" value="CDK"/>
</dbReference>
<dbReference type="InterPro" id="IPR011009">
    <property type="entry name" value="Kinase-like_dom_sf"/>
</dbReference>
<dbReference type="InterPro" id="IPR000719">
    <property type="entry name" value="Prot_kinase_dom"/>
</dbReference>
<dbReference type="InterPro" id="IPR017441">
    <property type="entry name" value="Protein_kinase_ATP_BS"/>
</dbReference>
<dbReference type="InterPro" id="IPR008271">
    <property type="entry name" value="Ser/Thr_kinase_AS"/>
</dbReference>
<dbReference type="PANTHER" id="PTHR24056">
    <property type="entry name" value="CELL DIVISION PROTEIN KINASE"/>
    <property type="match status" value="1"/>
</dbReference>
<dbReference type="PANTHER" id="PTHR24056:SF192">
    <property type="entry name" value="CYCLIN-DEPENDENT KINASE-LIKE 1"/>
    <property type="match status" value="1"/>
</dbReference>
<dbReference type="Pfam" id="PF00069">
    <property type="entry name" value="Pkinase"/>
    <property type="match status" value="1"/>
</dbReference>
<dbReference type="SMART" id="SM00220">
    <property type="entry name" value="S_TKc"/>
    <property type="match status" value="1"/>
</dbReference>
<dbReference type="SUPFAM" id="SSF56112">
    <property type="entry name" value="Protein kinase-like (PK-like)"/>
    <property type="match status" value="1"/>
</dbReference>
<dbReference type="PROSITE" id="PS00107">
    <property type="entry name" value="PROTEIN_KINASE_ATP"/>
    <property type="match status" value="1"/>
</dbReference>
<dbReference type="PROSITE" id="PS50011">
    <property type="entry name" value="PROTEIN_KINASE_DOM"/>
    <property type="match status" value="1"/>
</dbReference>
<dbReference type="PROSITE" id="PS00108">
    <property type="entry name" value="PROTEIN_KINASE_ST"/>
    <property type="match status" value="1"/>
</dbReference>